<organism>
    <name type="scientific">Mesocricetus auratus</name>
    <name type="common">Golden hamster</name>
    <dbReference type="NCBI Taxonomy" id="10036"/>
    <lineage>
        <taxon>Eukaryota</taxon>
        <taxon>Metazoa</taxon>
        <taxon>Chordata</taxon>
        <taxon>Craniata</taxon>
        <taxon>Vertebrata</taxon>
        <taxon>Euteleostomi</taxon>
        <taxon>Mammalia</taxon>
        <taxon>Eutheria</taxon>
        <taxon>Euarchontoglires</taxon>
        <taxon>Glires</taxon>
        <taxon>Rodentia</taxon>
        <taxon>Myomorpha</taxon>
        <taxon>Muroidea</taxon>
        <taxon>Cricetidae</taxon>
        <taxon>Cricetinae</taxon>
        <taxon>Mesocricetus</taxon>
    </lineage>
</organism>
<protein>
    <recommendedName>
        <fullName evidence="1">60 kDa heat shock protein, mitochondrial</fullName>
        <ecNumber evidence="1">5.6.1.7</ecNumber>
    </recommendedName>
    <alternativeName>
        <fullName evidence="1">60 kDa chaperonin</fullName>
    </alternativeName>
    <alternativeName>
        <fullName evidence="1">Chaperonin 60</fullName>
        <shortName evidence="1">CPN60</shortName>
    </alternativeName>
    <alternativeName>
        <fullName evidence="1">Heat shock protein 60</fullName>
        <shortName evidence="1">HSP-60</shortName>
        <shortName evidence="1">Hsp60</shortName>
    </alternativeName>
    <alternativeName>
        <fullName evidence="1">Mitochondrial matrix protein P1</fullName>
    </alternativeName>
</protein>
<sequence>ALMLQGVDLLADAVAVTMGPKGRTVIIEQSWGSPKLVQDVANNTNEEAGDGTTTATVLARGANPVEIRRGVMLAVDAVIAELKKTLNDELEIIEGMKFDRGYISPYFINTSKCEFQDAYVLLSEKKISSVQSIVPALEIANAHRKPLVIIAEDVDGEALSTLVLNRVGLQVVAVKAPGFGDNRKNQLKDMAIATGGAVFGEEGLNLNLEDVQAHDLGKIQEITEQLDITTSEYEKEKVTDALNATRAAVEEGIVLGGGCALLRIGIEIIKR</sequence>
<comment type="function">
    <text evidence="1">Chaperonin implicated in mitochondrial protein import and macromolecular assembly. Together with Hsp10, facilitates the correct folding of imported proteins. May also prevent misfolding and promote the refolding and proper assembly of unfolded polypeptides generated under stress conditions in the mitochondrial matrix. The functional units of these chaperonins consist of heptameric rings of the large subunit Hsp60, which function as a back-to-back double ring. In a cyclic reaction, Hsp60 ring complexes bind one unfolded substrate protein per ring, followed by the binding of ATP and association with 2 heptameric rings of the co-chaperonin Hsp10. This leads to sequestration of the substrate protein in the inner cavity of Hsp60 where, for a certain period of time, it can fold undisturbed by other cell components. Synchronous hydrolysis of ATP in all Hsp60 subunits results in the dissociation of the chaperonin rings and the release of ADP and the folded substrate protein.</text>
</comment>
<comment type="catalytic activity">
    <reaction evidence="1">
        <text>ATP + H2O + a folded polypeptide = ADP + phosphate + an unfolded polypeptide.</text>
        <dbReference type="EC" id="5.6.1.7"/>
    </reaction>
</comment>
<comment type="subunit">
    <text evidence="1 2">Homoheptamer arranged in a ring structure. The functional units of these chaperonins consist of heptameric rings of the large subunit Hsp60, which function as a back-to-back double ring. Interacts with 2 heptameric Hsp10 rings to form the symmetrical football complex (By similarity). Interacts with HRAS (By similarity). Interacts with ATAD3A. Interacts with ETFBKMT and EEF1AKMT3 (By similarity). Interacts with MFHAS1 (By similarity).</text>
</comment>
<comment type="subcellular location">
    <subcellularLocation>
        <location evidence="1">Mitochondrion matrix</location>
    </subcellularLocation>
</comment>
<comment type="tissue specificity">
    <text evidence="4">Detected at higher levels in caput epididymal spermatazoa than in cauda epididymal spermatazoa (at protein level).</text>
</comment>
<comment type="similarity">
    <text evidence="3">Belongs to the chaperonin (HSP60) family.</text>
</comment>
<gene>
    <name evidence="1" type="primary">HSPD1</name>
    <name evidence="1" type="synonym">HSP60</name>
</gene>
<name>CH60_MESAU</name>
<keyword id="KW-0007">Acetylation</keyword>
<keyword id="KW-0067">ATP-binding</keyword>
<keyword id="KW-0143">Chaperone</keyword>
<keyword id="KW-0413">Isomerase</keyword>
<keyword id="KW-0496">Mitochondrion</keyword>
<keyword id="KW-0547">Nucleotide-binding</keyword>
<keyword id="KW-0597">Phosphoprotein</keyword>
<keyword id="KW-1185">Reference proteome</keyword>
<dbReference type="EC" id="5.6.1.7" evidence="1"/>
<dbReference type="SMR" id="P86206"/>
<dbReference type="Proteomes" id="UP000189706">
    <property type="component" value="Unplaced"/>
</dbReference>
<dbReference type="GO" id="GO:0005737">
    <property type="term" value="C:cytoplasm"/>
    <property type="evidence" value="ECO:0000250"/>
    <property type="project" value="UniProtKB"/>
</dbReference>
<dbReference type="GO" id="GO:0005759">
    <property type="term" value="C:mitochondrial matrix"/>
    <property type="evidence" value="ECO:0007669"/>
    <property type="project" value="UniProtKB-SubCell"/>
</dbReference>
<dbReference type="GO" id="GO:0032991">
    <property type="term" value="C:protein-containing complex"/>
    <property type="evidence" value="ECO:0000250"/>
    <property type="project" value="UniProtKB"/>
</dbReference>
<dbReference type="GO" id="GO:0005524">
    <property type="term" value="F:ATP binding"/>
    <property type="evidence" value="ECO:0007669"/>
    <property type="project" value="UniProtKB-KW"/>
</dbReference>
<dbReference type="GO" id="GO:0140662">
    <property type="term" value="F:ATP-dependent protein folding chaperone"/>
    <property type="evidence" value="ECO:0007669"/>
    <property type="project" value="InterPro"/>
</dbReference>
<dbReference type="GO" id="GO:0016853">
    <property type="term" value="F:isomerase activity"/>
    <property type="evidence" value="ECO:0007669"/>
    <property type="project" value="UniProtKB-KW"/>
</dbReference>
<dbReference type="GO" id="GO:0042026">
    <property type="term" value="P:protein refolding"/>
    <property type="evidence" value="ECO:0007669"/>
    <property type="project" value="InterPro"/>
</dbReference>
<dbReference type="FunFam" id="3.50.7.10:FF:000001">
    <property type="entry name" value="60 kDa chaperonin"/>
    <property type="match status" value="1"/>
</dbReference>
<dbReference type="Gene3D" id="3.50.7.10">
    <property type="entry name" value="GroEL"/>
    <property type="match status" value="1"/>
</dbReference>
<dbReference type="Gene3D" id="1.10.560.10">
    <property type="entry name" value="GroEL-like equatorial domain"/>
    <property type="match status" value="2"/>
</dbReference>
<dbReference type="Gene3D" id="3.30.260.10">
    <property type="entry name" value="TCP-1-like chaperonin intermediate domain"/>
    <property type="match status" value="1"/>
</dbReference>
<dbReference type="InterPro" id="IPR018370">
    <property type="entry name" value="Chaperonin_Cpn60_CS"/>
</dbReference>
<dbReference type="InterPro" id="IPR001844">
    <property type="entry name" value="Cpn60/GroEL"/>
</dbReference>
<dbReference type="InterPro" id="IPR027409">
    <property type="entry name" value="GroEL-like_apical_dom_sf"/>
</dbReference>
<dbReference type="InterPro" id="IPR027413">
    <property type="entry name" value="GROEL-like_equatorial_sf"/>
</dbReference>
<dbReference type="InterPro" id="IPR027410">
    <property type="entry name" value="TCP-1-like_intermed_sf"/>
</dbReference>
<dbReference type="PANTHER" id="PTHR45633">
    <property type="entry name" value="60 KDA HEAT SHOCK PROTEIN, MITOCHONDRIAL"/>
    <property type="match status" value="1"/>
</dbReference>
<dbReference type="SUPFAM" id="SSF52029">
    <property type="entry name" value="GroEL apical domain-like"/>
    <property type="match status" value="1"/>
</dbReference>
<dbReference type="SUPFAM" id="SSF48592">
    <property type="entry name" value="GroEL equatorial domain-like"/>
    <property type="match status" value="1"/>
</dbReference>
<dbReference type="PROSITE" id="PS00296">
    <property type="entry name" value="CHAPERONINS_CPN60"/>
    <property type="match status" value="1"/>
</dbReference>
<reference key="1">
    <citation type="journal article" date="2010" name="Asian J. Androl.">
        <title>Glucose-regulated protein precursor (GRP78) and tumor rejection antigen (GP96) are unique to hamster caput epididymal spermatozoa.</title>
        <authorList>
            <person name="Kameshwari D.B."/>
            <person name="Bhande S."/>
            <person name="Sundaram C.S."/>
            <person name="Kota V."/>
            <person name="Siva A.B."/>
            <person name="Shivaji S."/>
        </authorList>
    </citation>
    <scope>IDENTIFICATION BY MASS SPECTROMETRY</scope>
    <scope>TISSUE SPECIFICITY</scope>
</reference>
<accession>P86206</accession>
<evidence type="ECO:0000250" key="1">
    <source>
        <dbReference type="UniProtKB" id="P10809"/>
    </source>
</evidence>
<evidence type="ECO:0000250" key="2">
    <source>
        <dbReference type="UniProtKB" id="P63038"/>
    </source>
</evidence>
<evidence type="ECO:0000255" key="3"/>
<evidence type="ECO:0000269" key="4">
    <source>
    </source>
</evidence>
<evidence type="ECO:0000305" key="5"/>
<proteinExistence type="evidence at protein level"/>
<feature type="chain" id="PRO_0000394298" description="60 kDa heat shock protein, mitochondrial">
    <location>
        <begin position="1" status="less than"/>
        <end position="271" status="greater than"/>
    </location>
</feature>
<feature type="binding site" evidence="1">
    <location>
        <begin position="50"/>
        <end position="54"/>
    </location>
    <ligand>
        <name>ATP</name>
        <dbReference type="ChEBI" id="CHEBI:30616"/>
    </ligand>
</feature>
<feature type="binding site" evidence="1">
    <location>
        <position position="257"/>
    </location>
    <ligand>
        <name>ATP</name>
        <dbReference type="ChEBI" id="CHEBI:30616"/>
    </ligand>
</feature>
<feature type="modified residue" description="Phosphoserine" evidence="1">
    <location>
        <position position="30"/>
    </location>
</feature>
<feature type="modified residue" description="Phosphoserine" evidence="1">
    <location>
        <position position="33"/>
    </location>
</feature>
<feature type="modified residue" description="N6-acetyllysine" evidence="2">
    <location>
        <position position="83"/>
    </location>
</feature>
<feature type="modified residue" description="N6-acetyllysine; alternate" evidence="2">
    <location>
        <position position="84"/>
    </location>
</feature>
<feature type="modified residue" description="N6-succinyllysine; alternate" evidence="2">
    <location>
        <position position="84"/>
    </location>
</feature>
<feature type="modified residue" description="N6-acetyllysine; alternate" evidence="1">
    <location>
        <position position="97"/>
    </location>
</feature>
<feature type="modified residue" description="N6-succinyllysine; alternate" evidence="2">
    <location>
        <position position="97"/>
    </location>
</feature>
<feature type="modified residue" description="N6-acetyllysine; alternate" evidence="2">
    <location>
        <position position="112"/>
    </location>
</feature>
<feature type="modified residue" description="N6-succinyllysine; alternate" evidence="2">
    <location>
        <position position="112"/>
    </location>
</feature>
<feature type="modified residue" description="N6-acetyllysine" evidence="2">
    <location>
        <position position="125"/>
    </location>
</feature>
<feature type="modified residue" description="N6-acetyllysine; alternate" evidence="2">
    <location>
        <position position="126"/>
    </location>
</feature>
<feature type="modified residue" description="N6-succinyllysine; alternate" evidence="2">
    <location>
        <position position="126"/>
    </location>
</feature>
<feature type="modified residue" description="N6-acetyllysine" evidence="1">
    <location>
        <position position="145"/>
    </location>
</feature>
<feature type="modified residue" description="N6-succinyllysine" evidence="2">
    <location>
        <position position="175"/>
    </location>
</feature>
<feature type="modified residue" description="N6-acetyllysine" evidence="2">
    <location>
        <position position="188"/>
    </location>
</feature>
<feature type="modified residue" description="N6-acetyllysine" evidence="2">
    <location>
        <position position="237"/>
    </location>
</feature>
<feature type="modified residue" description="N6-acetyllysine" evidence="1">
    <location>
        <position position="270"/>
    </location>
</feature>
<feature type="non-consecutive residues" evidence="5">
    <location>
        <begin position="35"/>
        <end position="36"/>
    </location>
</feature>
<feature type="non-consecutive residues" evidence="5">
    <location>
        <begin position="60"/>
        <end position="61"/>
    </location>
</feature>
<feature type="non-consecutive residues" evidence="5">
    <location>
        <begin position="84"/>
        <end position="85"/>
    </location>
</feature>
<feature type="non-consecutive residues" evidence="5">
    <location>
        <begin position="112"/>
        <end position="113"/>
    </location>
</feature>
<feature type="non-consecutive residues" evidence="5">
    <location>
        <begin position="166"/>
        <end position="167"/>
    </location>
</feature>
<feature type="non-consecutive residues" evidence="5">
    <location>
        <begin position="218"/>
        <end position="219"/>
    </location>
</feature>
<feature type="non-consecutive residues" evidence="5">
    <location>
        <begin position="237"/>
        <end position="238"/>
    </location>
</feature>
<feature type="non-consecutive residues" evidence="5">
    <location>
        <begin position="263"/>
        <end position="264"/>
    </location>
</feature>
<feature type="non-terminal residue">
    <location>
        <position position="1"/>
    </location>
</feature>
<feature type="non-terminal residue">
    <location>
        <position position="271"/>
    </location>
</feature>